<accession>Q9MUV9</accession>
<keyword id="KW-0121">Carboxypeptidase</keyword>
<keyword id="KW-0133">Cell shape</keyword>
<keyword id="KW-0150">Chloroplast</keyword>
<keyword id="KW-0378">Hydrolase</keyword>
<keyword id="KW-0472">Membrane</keyword>
<keyword id="KW-0573">Peptidoglycan synthesis</keyword>
<keyword id="KW-0934">Plastid</keyword>
<keyword id="KW-0645">Protease</keyword>
<keyword id="KW-0812">Transmembrane</keyword>
<keyword id="KW-1133">Transmembrane helix</keyword>
<name>FTSIH_MESVI</name>
<gene>
    <name type="primary">ftsI</name>
</gene>
<reference key="1">
    <citation type="journal article" date="2000" name="Nature">
        <title>Ancestral chloroplast genome in Mesostigma viride reveals an early branch of green plant evolution.</title>
        <authorList>
            <person name="Lemieux C."/>
            <person name="Otis C."/>
            <person name="Turmel M."/>
        </authorList>
    </citation>
    <scope>NUCLEOTIDE SEQUENCE [LARGE SCALE GENOMIC DNA]</scope>
    <source>
        <strain>NIES-296 / KY-14 / CCMP 2046</strain>
    </source>
</reference>
<proteinExistence type="inferred from homology"/>
<dbReference type="EC" id="3.4.16.4" evidence="1"/>
<dbReference type="EMBL" id="AF166114">
    <property type="protein sequence ID" value="AAF43792.1"/>
    <property type="molecule type" value="Genomic_DNA"/>
</dbReference>
<dbReference type="RefSeq" id="NP_038351.1">
    <property type="nucleotide sequence ID" value="NC_002186.1"/>
</dbReference>
<dbReference type="SMR" id="Q9MUV9"/>
<dbReference type="GeneID" id="800933"/>
<dbReference type="GO" id="GO:0031969">
    <property type="term" value="C:chloroplast membrane"/>
    <property type="evidence" value="ECO:0007669"/>
    <property type="project" value="UniProtKB-SubCell"/>
</dbReference>
<dbReference type="GO" id="GO:0005886">
    <property type="term" value="C:plasma membrane"/>
    <property type="evidence" value="ECO:0007669"/>
    <property type="project" value="TreeGrafter"/>
</dbReference>
<dbReference type="GO" id="GO:0008658">
    <property type="term" value="F:penicillin binding"/>
    <property type="evidence" value="ECO:0007669"/>
    <property type="project" value="InterPro"/>
</dbReference>
<dbReference type="GO" id="GO:0009002">
    <property type="term" value="F:serine-type D-Ala-D-Ala carboxypeptidase activity"/>
    <property type="evidence" value="ECO:0007669"/>
    <property type="project" value="UniProtKB-EC"/>
</dbReference>
<dbReference type="GO" id="GO:0071555">
    <property type="term" value="P:cell wall organization"/>
    <property type="evidence" value="ECO:0007669"/>
    <property type="project" value="TreeGrafter"/>
</dbReference>
<dbReference type="GO" id="GO:0006508">
    <property type="term" value="P:proteolysis"/>
    <property type="evidence" value="ECO:0007669"/>
    <property type="project" value="UniProtKB-KW"/>
</dbReference>
<dbReference type="GO" id="GO:0008360">
    <property type="term" value="P:regulation of cell shape"/>
    <property type="evidence" value="ECO:0007669"/>
    <property type="project" value="UniProtKB-KW"/>
</dbReference>
<dbReference type="Gene3D" id="3.30.450.330">
    <property type="match status" value="1"/>
</dbReference>
<dbReference type="Gene3D" id="3.40.710.10">
    <property type="entry name" value="DD-peptidase/beta-lactamase superfamily"/>
    <property type="match status" value="1"/>
</dbReference>
<dbReference type="Gene3D" id="3.90.1310.10">
    <property type="entry name" value="Penicillin-binding protein 2a (Domain 2)"/>
    <property type="match status" value="1"/>
</dbReference>
<dbReference type="InterPro" id="IPR050515">
    <property type="entry name" value="Bact_Transpept/Beta-Lactamase"/>
</dbReference>
<dbReference type="InterPro" id="IPR012338">
    <property type="entry name" value="Beta-lactam/transpept-like"/>
</dbReference>
<dbReference type="InterPro" id="IPR005311">
    <property type="entry name" value="PBP_dimer"/>
</dbReference>
<dbReference type="InterPro" id="IPR036138">
    <property type="entry name" value="PBP_dimer_sf"/>
</dbReference>
<dbReference type="InterPro" id="IPR001460">
    <property type="entry name" value="PCN-bd_Tpept"/>
</dbReference>
<dbReference type="PANTHER" id="PTHR30627">
    <property type="entry name" value="PEPTIDOGLYCAN D,D-TRANSPEPTIDASE"/>
    <property type="match status" value="1"/>
</dbReference>
<dbReference type="PANTHER" id="PTHR30627:SF1">
    <property type="entry name" value="PEPTIDOGLYCAN D,D-TRANSPEPTIDASE FTSI"/>
    <property type="match status" value="1"/>
</dbReference>
<dbReference type="Pfam" id="PF03717">
    <property type="entry name" value="PBP_dimer"/>
    <property type="match status" value="1"/>
</dbReference>
<dbReference type="Pfam" id="PF00905">
    <property type="entry name" value="Transpeptidase"/>
    <property type="match status" value="1"/>
</dbReference>
<dbReference type="SUPFAM" id="SSF56601">
    <property type="entry name" value="beta-lactamase/transpeptidase-like"/>
    <property type="match status" value="1"/>
</dbReference>
<dbReference type="SUPFAM" id="SSF56519">
    <property type="entry name" value="Penicillin binding protein dimerisation domain"/>
    <property type="match status" value="1"/>
</dbReference>
<sequence>MNKKKIFGFSRIVLVWILFFSGSSLLLGRLFYLQVMKGSWLTNKAKNQQTIILNTFQPRRTICDRNGIPLAIDTLAYDIFAHPLHFKKSTFDIANELYSILNLDVEYLQNLFIKNTTGICIAHQAPEQIANQIIAKNIEGIELVQHPKRYYPYKQLCADVIGYVNTLHEGQAGLELSCQESLQLQSPEVVSAIDGRGFLINDGIPRELFKQDSLCLQLTIDLDLQKASYLAIYDGIKKCNAKRGTVIILDPYTGAILALVTAPSYDPNVYYDFPIERFKNWPVIDLYEPGSTFKPINMAIALEAKAIKKNDFFYDEGCIQISDTIITNNNYYNKQFACDKNSHLNITDVLSNSSNVGMVHILQRLAPEIYYQWIQKLGLGNNVFLETDFPLSSYSSLKNILEFTSYNIESAVTSFGQGLAMTPIKLAQLYACLSNGGNIIRPYIVDGLFDIQNEKLFTLNNNIFDQNISLKRKLLKTKVFSPSTTEIVLDMLEEVIFNGTGSSCFLPGYRIGGKTGTSQKHAEQGGYSTKHILTSFAAIFPINNPQYVILSVIDEPSIPLSFGSNTAGPVVRSIIESLIRIKKIPPSIPTLTHHYYCK</sequence>
<feature type="chain" id="PRO_0000195461" description="Peptidoglycan D,D-transpeptidase FtsI homolog">
    <location>
        <begin position="1"/>
        <end position="598"/>
    </location>
</feature>
<feature type="transmembrane region" description="Helical" evidence="2">
    <location>
        <begin position="12"/>
        <end position="33"/>
    </location>
</feature>
<feature type="active site" description="Acyl-ester intermediate" evidence="1">
    <location>
        <position position="291"/>
    </location>
</feature>
<comment type="catalytic activity">
    <reaction evidence="1">
        <text>Preferential cleavage: (Ac)2-L-Lys-D-Ala-|-D-Ala. Also transpeptidation of peptidyl-alanyl moieties that are N-acyl substituents of D-alanine.</text>
        <dbReference type="EC" id="3.4.16.4"/>
    </reaction>
</comment>
<comment type="subcellular location">
    <subcellularLocation>
        <location evidence="3">Plastid</location>
        <location evidence="3">Chloroplast membrane</location>
        <topology evidence="3">Single-pass membrane protein</topology>
    </subcellularLocation>
</comment>
<comment type="miscellaneous">
    <text>The presence of this gene in the chloroplast genome suggests there may be an unsuspected vestigal peptidoglycan layer in this organism's chloroplasts.</text>
</comment>
<comment type="similarity">
    <text evidence="3">Belongs to the transpeptidase family.</text>
</comment>
<geneLocation type="chloroplast"/>
<protein>
    <recommendedName>
        <fullName evidence="3">Peptidoglycan D,D-transpeptidase FtsI homolog</fullName>
        <ecNumber evidence="1">3.4.16.4</ecNumber>
    </recommendedName>
</protein>
<organism>
    <name type="scientific">Mesostigma viride</name>
    <name type="common">Green alga</name>
    <dbReference type="NCBI Taxonomy" id="41882"/>
    <lineage>
        <taxon>Eukaryota</taxon>
        <taxon>Viridiplantae</taxon>
        <taxon>Streptophyta</taxon>
        <taxon>Mesostigmatophyceae</taxon>
        <taxon>Mesostigmatales</taxon>
        <taxon>Mesostigmataceae</taxon>
        <taxon>Mesostigma</taxon>
    </lineage>
</organism>
<evidence type="ECO:0000250" key="1">
    <source>
        <dbReference type="UniProtKB" id="P0AD68"/>
    </source>
</evidence>
<evidence type="ECO:0000255" key="2"/>
<evidence type="ECO:0000305" key="3"/>